<sequence>MPSFDIVSEVDLQEARNAVDNASREVESRFDFRNVEASFELNDASKTIKVLSESDFQVNQLLDILRAKLLKRGIEGSSLDVPENIVHSGKTWFVEAKLKQGIESATQKKIVKMIKDSKLKVQAQIQGDEIRVTGKSRDDLQAVMAMVRGGDLGQPFQFKNFRD</sequence>
<accession>B2U4N0</accession>
<evidence type="ECO:0000255" key="1">
    <source>
        <dbReference type="HAMAP-Rule" id="MF_00632"/>
    </source>
</evidence>
<reference key="1">
    <citation type="submission" date="2008-05" db="EMBL/GenBank/DDBJ databases">
        <title>Complete sequence of Shigella boydii serotype 18 strain BS512.</title>
        <authorList>
            <person name="Rasko D.A."/>
            <person name="Rosovitz M."/>
            <person name="Maurelli A.T."/>
            <person name="Myers G."/>
            <person name="Seshadri R."/>
            <person name="Cer R."/>
            <person name="Jiang L."/>
            <person name="Ravel J."/>
            <person name="Sebastian Y."/>
        </authorList>
    </citation>
    <scope>NUCLEOTIDE SEQUENCE [LARGE SCALE GENOMIC DNA]</scope>
    <source>
        <strain>CDC 3083-94 / BS512</strain>
    </source>
</reference>
<proteinExistence type="inferred from homology"/>
<feature type="chain" id="PRO_1000130652" description="Nucleotide-binding protein YajQ">
    <location>
        <begin position="1"/>
        <end position="163"/>
    </location>
</feature>
<name>YAJQ_SHIB3</name>
<dbReference type="EMBL" id="CP001063">
    <property type="protein sequence ID" value="ACD07466.1"/>
    <property type="molecule type" value="Genomic_DNA"/>
</dbReference>
<dbReference type="RefSeq" id="WP_001138904.1">
    <property type="nucleotide sequence ID" value="NC_010658.1"/>
</dbReference>
<dbReference type="SMR" id="B2U4N0"/>
<dbReference type="STRING" id="344609.SbBS512_E0348"/>
<dbReference type="GeneID" id="93777034"/>
<dbReference type="KEGG" id="sbc:SbBS512_E0348"/>
<dbReference type="HOGENOM" id="CLU_099839_1_0_6"/>
<dbReference type="Proteomes" id="UP000001030">
    <property type="component" value="Chromosome"/>
</dbReference>
<dbReference type="GO" id="GO:0005829">
    <property type="term" value="C:cytosol"/>
    <property type="evidence" value="ECO:0007669"/>
    <property type="project" value="TreeGrafter"/>
</dbReference>
<dbReference type="GO" id="GO:0000166">
    <property type="term" value="F:nucleotide binding"/>
    <property type="evidence" value="ECO:0007669"/>
    <property type="project" value="TreeGrafter"/>
</dbReference>
<dbReference type="CDD" id="cd11740">
    <property type="entry name" value="YajQ_like"/>
    <property type="match status" value="1"/>
</dbReference>
<dbReference type="FunFam" id="3.30.70.860:FF:000001">
    <property type="entry name" value="UPF0234 protein YajQ"/>
    <property type="match status" value="1"/>
</dbReference>
<dbReference type="FunFam" id="3.30.70.990:FF:000001">
    <property type="entry name" value="UPF0234 protein YajQ"/>
    <property type="match status" value="1"/>
</dbReference>
<dbReference type="Gene3D" id="3.30.70.860">
    <property type="match status" value="1"/>
</dbReference>
<dbReference type="Gene3D" id="3.30.70.990">
    <property type="entry name" value="YajQ-like, domain 2"/>
    <property type="match status" value="1"/>
</dbReference>
<dbReference type="HAMAP" id="MF_00632">
    <property type="entry name" value="YajQ"/>
    <property type="match status" value="1"/>
</dbReference>
<dbReference type="InterPro" id="IPR007551">
    <property type="entry name" value="DUF520"/>
</dbReference>
<dbReference type="InterPro" id="IPR035571">
    <property type="entry name" value="UPF0234-like_C"/>
</dbReference>
<dbReference type="InterPro" id="IPR035570">
    <property type="entry name" value="UPF0234_N"/>
</dbReference>
<dbReference type="InterPro" id="IPR036183">
    <property type="entry name" value="YajQ-like_sf"/>
</dbReference>
<dbReference type="NCBIfam" id="NF003819">
    <property type="entry name" value="PRK05412.1"/>
    <property type="match status" value="1"/>
</dbReference>
<dbReference type="PANTHER" id="PTHR30476">
    <property type="entry name" value="UPF0234 PROTEIN YAJQ"/>
    <property type="match status" value="1"/>
</dbReference>
<dbReference type="PANTHER" id="PTHR30476:SF0">
    <property type="entry name" value="UPF0234 PROTEIN YAJQ"/>
    <property type="match status" value="1"/>
</dbReference>
<dbReference type="Pfam" id="PF04461">
    <property type="entry name" value="DUF520"/>
    <property type="match status" value="1"/>
</dbReference>
<dbReference type="SUPFAM" id="SSF89963">
    <property type="entry name" value="YajQ-like"/>
    <property type="match status" value="2"/>
</dbReference>
<keyword id="KW-0547">Nucleotide-binding</keyword>
<keyword id="KW-1185">Reference proteome</keyword>
<organism>
    <name type="scientific">Shigella boydii serotype 18 (strain CDC 3083-94 / BS512)</name>
    <dbReference type="NCBI Taxonomy" id="344609"/>
    <lineage>
        <taxon>Bacteria</taxon>
        <taxon>Pseudomonadati</taxon>
        <taxon>Pseudomonadota</taxon>
        <taxon>Gammaproteobacteria</taxon>
        <taxon>Enterobacterales</taxon>
        <taxon>Enterobacteriaceae</taxon>
        <taxon>Shigella</taxon>
    </lineage>
</organism>
<comment type="function">
    <text evidence="1">Nucleotide-binding protein.</text>
</comment>
<comment type="similarity">
    <text evidence="1">Belongs to the YajQ family.</text>
</comment>
<gene>
    <name evidence="1" type="primary">yajQ</name>
    <name type="ordered locus">SbBS512_E0348</name>
</gene>
<protein>
    <recommendedName>
        <fullName evidence="1">Nucleotide-binding protein YajQ</fullName>
    </recommendedName>
</protein>